<feature type="chain" id="PRO_1000131125" description="UPF0246 protein LCABL_22600">
    <location>
        <begin position="1"/>
        <end position="247"/>
    </location>
</feature>
<evidence type="ECO:0000255" key="1">
    <source>
        <dbReference type="HAMAP-Rule" id="MF_00652"/>
    </source>
</evidence>
<gene>
    <name type="ordered locus">LCABL_22600</name>
</gene>
<reference key="1">
    <citation type="submission" date="2008-06" db="EMBL/GenBank/DDBJ databases">
        <title>Lactobacillus casei BL23 complete genome sequence.</title>
        <authorList>
            <person name="Maze A."/>
            <person name="Boel G."/>
            <person name="Bourand A."/>
            <person name="Loux V."/>
            <person name="Gibrat J.F."/>
            <person name="Zuniga M."/>
            <person name="Hartke A."/>
            <person name="Deutscher J."/>
        </authorList>
    </citation>
    <scope>NUCLEOTIDE SEQUENCE [LARGE SCALE GENOMIC DNA]</scope>
    <source>
        <strain>BL23</strain>
    </source>
</reference>
<proteinExistence type="inferred from homology"/>
<name>Y2260_LACCB</name>
<sequence length="247" mass="28450">MKFIIAPAKKMIRAQDDFPVQSQPKFRVQAGELLLLMQQLTFSEAQALWHTSDKLTQTAYNQLQQSDLTRQQSPAIFSYSGIQYQYMAPDLLDDAGLVYIQQHLRILSGLYGILRPFDGVVPYRLEMQNHLPLPHHRNLYDFWGNRLYQALARMPGPIINLASDEYAKAIRPYLQAKDQFIDVRFAHRVNGQLKTRATYAKMARGEMIRFAASHRLTKAADLKNFDSPTYRFNAHLSTATQLVFIAK</sequence>
<dbReference type="EMBL" id="FM177140">
    <property type="protein sequence ID" value="CAQ67327.1"/>
    <property type="molecule type" value="Genomic_DNA"/>
</dbReference>
<dbReference type="SMR" id="B3W9F8"/>
<dbReference type="KEGG" id="lcb:LCABL_22600"/>
<dbReference type="HOGENOM" id="CLU_061989_1_0_9"/>
<dbReference type="GO" id="GO:0005829">
    <property type="term" value="C:cytosol"/>
    <property type="evidence" value="ECO:0007669"/>
    <property type="project" value="TreeGrafter"/>
</dbReference>
<dbReference type="GO" id="GO:0033194">
    <property type="term" value="P:response to hydroperoxide"/>
    <property type="evidence" value="ECO:0007669"/>
    <property type="project" value="TreeGrafter"/>
</dbReference>
<dbReference type="HAMAP" id="MF_00652">
    <property type="entry name" value="UPF0246"/>
    <property type="match status" value="1"/>
</dbReference>
<dbReference type="InterPro" id="IPR005583">
    <property type="entry name" value="YaaA"/>
</dbReference>
<dbReference type="NCBIfam" id="NF002543">
    <property type="entry name" value="PRK02101.1-4"/>
    <property type="match status" value="1"/>
</dbReference>
<dbReference type="PANTHER" id="PTHR30283:SF4">
    <property type="entry name" value="PEROXIDE STRESS RESISTANCE PROTEIN YAAA"/>
    <property type="match status" value="1"/>
</dbReference>
<dbReference type="PANTHER" id="PTHR30283">
    <property type="entry name" value="PEROXIDE STRESS RESPONSE PROTEIN YAAA"/>
    <property type="match status" value="1"/>
</dbReference>
<dbReference type="Pfam" id="PF03883">
    <property type="entry name" value="H2O2_YaaD"/>
    <property type="match status" value="1"/>
</dbReference>
<organism>
    <name type="scientific">Lacticaseibacillus casei (strain BL23)</name>
    <name type="common">Lactobacillus casei</name>
    <dbReference type="NCBI Taxonomy" id="543734"/>
    <lineage>
        <taxon>Bacteria</taxon>
        <taxon>Bacillati</taxon>
        <taxon>Bacillota</taxon>
        <taxon>Bacilli</taxon>
        <taxon>Lactobacillales</taxon>
        <taxon>Lactobacillaceae</taxon>
        <taxon>Lacticaseibacillus</taxon>
    </lineage>
</organism>
<comment type="similarity">
    <text evidence="1">Belongs to the UPF0246 family.</text>
</comment>
<accession>B3W9F8</accession>
<protein>
    <recommendedName>
        <fullName evidence="1">UPF0246 protein LCABL_22600</fullName>
    </recommendedName>
</protein>